<gene>
    <name evidence="1" type="primary">mraZ</name>
    <name type="ordered locus">Geob_0771</name>
</gene>
<proteinExistence type="inferred from homology"/>
<comment type="subunit">
    <text evidence="1">Forms oligomers.</text>
</comment>
<comment type="subcellular location">
    <subcellularLocation>
        <location evidence="1">Cytoplasm</location>
        <location evidence="1">Nucleoid</location>
    </subcellularLocation>
</comment>
<comment type="similarity">
    <text evidence="1">Belongs to the MraZ family.</text>
</comment>
<accession>B9M163</accession>
<reference key="1">
    <citation type="submission" date="2009-01" db="EMBL/GenBank/DDBJ databases">
        <title>Complete sequence of Geobacter sp. FRC-32.</title>
        <authorList>
            <consortium name="US DOE Joint Genome Institute"/>
            <person name="Lucas S."/>
            <person name="Copeland A."/>
            <person name="Lapidus A."/>
            <person name="Glavina del Rio T."/>
            <person name="Dalin E."/>
            <person name="Tice H."/>
            <person name="Bruce D."/>
            <person name="Goodwin L."/>
            <person name="Pitluck S."/>
            <person name="Saunders E."/>
            <person name="Brettin T."/>
            <person name="Detter J.C."/>
            <person name="Han C."/>
            <person name="Larimer F."/>
            <person name="Land M."/>
            <person name="Hauser L."/>
            <person name="Kyrpides N."/>
            <person name="Ovchinnikova G."/>
            <person name="Kostka J."/>
            <person name="Richardson P."/>
        </authorList>
    </citation>
    <scope>NUCLEOTIDE SEQUENCE [LARGE SCALE GENOMIC DNA]</scope>
    <source>
        <strain>DSM 22248 / JCM 15807 / FRC-32</strain>
    </source>
</reference>
<organism>
    <name type="scientific">Geotalea daltonii (strain DSM 22248 / JCM 15807 / FRC-32)</name>
    <name type="common">Geobacter daltonii</name>
    <dbReference type="NCBI Taxonomy" id="316067"/>
    <lineage>
        <taxon>Bacteria</taxon>
        <taxon>Pseudomonadati</taxon>
        <taxon>Thermodesulfobacteriota</taxon>
        <taxon>Desulfuromonadia</taxon>
        <taxon>Geobacterales</taxon>
        <taxon>Geobacteraceae</taxon>
        <taxon>Geotalea</taxon>
    </lineage>
</organism>
<evidence type="ECO:0000255" key="1">
    <source>
        <dbReference type="HAMAP-Rule" id="MF_01008"/>
    </source>
</evidence>
<evidence type="ECO:0000255" key="2">
    <source>
        <dbReference type="PROSITE-ProRule" id="PRU01076"/>
    </source>
</evidence>
<sequence>MFRGNFETSIDAKGRTSLPAKFREVLVDSFGDERFFMTNSNPVRLGDGGYSSGLVIYPYNEWLALEEKLKVGTGLGLSSAELASVKRRIVAPAVECVADKLGRILVPPHLRKSACLEREILFVGMLNKAEIWSQAEWEKVFRQDIENFPIDSPVLAELGL</sequence>
<protein>
    <recommendedName>
        <fullName>Transcriptional regulator MraZ</fullName>
    </recommendedName>
</protein>
<dbReference type="EMBL" id="CP001390">
    <property type="protein sequence ID" value="ACM19133.1"/>
    <property type="molecule type" value="Genomic_DNA"/>
</dbReference>
<dbReference type="RefSeq" id="WP_012645862.1">
    <property type="nucleotide sequence ID" value="NC_011979.1"/>
</dbReference>
<dbReference type="SMR" id="B9M163"/>
<dbReference type="STRING" id="316067.Geob_0771"/>
<dbReference type="KEGG" id="geo:Geob_0771"/>
<dbReference type="eggNOG" id="COG2001">
    <property type="taxonomic scope" value="Bacteria"/>
</dbReference>
<dbReference type="HOGENOM" id="CLU_107907_0_5_7"/>
<dbReference type="OrthoDB" id="9807753at2"/>
<dbReference type="Proteomes" id="UP000007721">
    <property type="component" value="Chromosome"/>
</dbReference>
<dbReference type="GO" id="GO:0005737">
    <property type="term" value="C:cytoplasm"/>
    <property type="evidence" value="ECO:0007669"/>
    <property type="project" value="UniProtKB-UniRule"/>
</dbReference>
<dbReference type="GO" id="GO:0009295">
    <property type="term" value="C:nucleoid"/>
    <property type="evidence" value="ECO:0007669"/>
    <property type="project" value="UniProtKB-SubCell"/>
</dbReference>
<dbReference type="GO" id="GO:0003700">
    <property type="term" value="F:DNA-binding transcription factor activity"/>
    <property type="evidence" value="ECO:0007669"/>
    <property type="project" value="UniProtKB-UniRule"/>
</dbReference>
<dbReference type="GO" id="GO:0000976">
    <property type="term" value="F:transcription cis-regulatory region binding"/>
    <property type="evidence" value="ECO:0007669"/>
    <property type="project" value="TreeGrafter"/>
</dbReference>
<dbReference type="GO" id="GO:2000143">
    <property type="term" value="P:negative regulation of DNA-templated transcription initiation"/>
    <property type="evidence" value="ECO:0007669"/>
    <property type="project" value="TreeGrafter"/>
</dbReference>
<dbReference type="CDD" id="cd16321">
    <property type="entry name" value="MraZ_C"/>
    <property type="match status" value="1"/>
</dbReference>
<dbReference type="CDD" id="cd16320">
    <property type="entry name" value="MraZ_N"/>
    <property type="match status" value="1"/>
</dbReference>
<dbReference type="Gene3D" id="3.40.1550.20">
    <property type="entry name" value="Transcriptional regulator MraZ domain"/>
    <property type="match status" value="1"/>
</dbReference>
<dbReference type="HAMAP" id="MF_01008">
    <property type="entry name" value="MraZ"/>
    <property type="match status" value="1"/>
</dbReference>
<dbReference type="InterPro" id="IPR003444">
    <property type="entry name" value="MraZ"/>
</dbReference>
<dbReference type="InterPro" id="IPR035644">
    <property type="entry name" value="MraZ_C"/>
</dbReference>
<dbReference type="InterPro" id="IPR020603">
    <property type="entry name" value="MraZ_dom"/>
</dbReference>
<dbReference type="InterPro" id="IPR035642">
    <property type="entry name" value="MraZ_N"/>
</dbReference>
<dbReference type="InterPro" id="IPR038619">
    <property type="entry name" value="MraZ_sf"/>
</dbReference>
<dbReference type="InterPro" id="IPR007159">
    <property type="entry name" value="SpoVT-AbrB_dom"/>
</dbReference>
<dbReference type="InterPro" id="IPR037914">
    <property type="entry name" value="SpoVT-AbrB_sf"/>
</dbReference>
<dbReference type="NCBIfam" id="TIGR00242">
    <property type="entry name" value="division/cell wall cluster transcriptional repressor MraZ"/>
    <property type="match status" value="1"/>
</dbReference>
<dbReference type="NCBIfam" id="NF001482">
    <property type="entry name" value="PRK00326.3-4"/>
    <property type="match status" value="1"/>
</dbReference>
<dbReference type="PANTHER" id="PTHR34701">
    <property type="entry name" value="TRANSCRIPTIONAL REGULATOR MRAZ"/>
    <property type="match status" value="1"/>
</dbReference>
<dbReference type="PANTHER" id="PTHR34701:SF1">
    <property type="entry name" value="TRANSCRIPTIONAL REGULATOR MRAZ"/>
    <property type="match status" value="1"/>
</dbReference>
<dbReference type="Pfam" id="PF02381">
    <property type="entry name" value="MraZ"/>
    <property type="match status" value="2"/>
</dbReference>
<dbReference type="SUPFAM" id="SSF89447">
    <property type="entry name" value="AbrB/MazE/MraZ-like"/>
    <property type="match status" value="1"/>
</dbReference>
<dbReference type="PROSITE" id="PS51740">
    <property type="entry name" value="SPOVT_ABRB"/>
    <property type="match status" value="2"/>
</dbReference>
<name>MRAZ_GEODF</name>
<keyword id="KW-0963">Cytoplasm</keyword>
<keyword id="KW-0238">DNA-binding</keyword>
<keyword id="KW-1185">Reference proteome</keyword>
<keyword id="KW-0677">Repeat</keyword>
<keyword id="KW-0804">Transcription</keyword>
<keyword id="KW-0805">Transcription regulation</keyword>
<feature type="chain" id="PRO_1000148857" description="Transcriptional regulator MraZ">
    <location>
        <begin position="1"/>
        <end position="160"/>
    </location>
</feature>
<feature type="domain" description="SpoVT-AbrB 1" evidence="2">
    <location>
        <begin position="5"/>
        <end position="50"/>
    </location>
</feature>
<feature type="domain" description="SpoVT-AbrB 2" evidence="2">
    <location>
        <begin position="93"/>
        <end position="136"/>
    </location>
</feature>